<name>GIGAN_ORYSJ</name>
<comment type="function">
    <text evidence="4">Involved in regulation of circadian rhythm, and in the control of the photoperiodic flowering. Acts as a suppressor of flowering under short-day (SD) and long-day (LD) conditions. Activates Hd1/CONSTANS gene.</text>
</comment>
<comment type="subcellular location">
    <subcellularLocation>
        <location evidence="1">Nucleus</location>
    </subcellularLocation>
</comment>
<comment type="alternative products">
    <event type="alternative splicing"/>
    <isoform>
        <id>Q9AWL7-1</id>
        <name>1</name>
        <sequence type="displayed"/>
    </isoform>
    <isoform>
        <id>Q9AWL7-2</id>
        <name>2</name>
        <sequence type="described" ref="VSP_013910"/>
    </isoform>
</comment>
<comment type="induction">
    <text evidence="3">Expressed with a circadian rhythm with the highest level 8 hours into the light and the lowest level at dawn. The peak of expression in long days is slightly lower, shifted later and the decrease is slower.</text>
</comment>
<comment type="similarity">
    <text evidence="5">Belongs to the GIGANTEA family.</text>
</comment>
<comment type="sequence caution" evidence="5">
    <conflict type="erroneous gene model prediction">
        <sequence resource="EMBL-CDS" id="BAD68053"/>
    </conflict>
</comment>
<evidence type="ECO:0000250" key="1"/>
<evidence type="ECO:0000256" key="2">
    <source>
        <dbReference type="SAM" id="MobiDB-lite"/>
    </source>
</evidence>
<evidence type="ECO:0000269" key="3">
    <source>
    </source>
</evidence>
<evidence type="ECO:0000269" key="4">
    <source>
    </source>
</evidence>
<evidence type="ECO:0000305" key="5"/>
<organism>
    <name type="scientific">Oryza sativa subsp. japonica</name>
    <name type="common">Rice</name>
    <dbReference type="NCBI Taxonomy" id="39947"/>
    <lineage>
        <taxon>Eukaryota</taxon>
        <taxon>Viridiplantae</taxon>
        <taxon>Streptophyta</taxon>
        <taxon>Embryophyta</taxon>
        <taxon>Tracheophyta</taxon>
        <taxon>Spermatophyta</taxon>
        <taxon>Magnoliopsida</taxon>
        <taxon>Liliopsida</taxon>
        <taxon>Poales</taxon>
        <taxon>Poaceae</taxon>
        <taxon>BOP clade</taxon>
        <taxon>Oryzoideae</taxon>
        <taxon>Oryzeae</taxon>
        <taxon>Oryzinae</taxon>
        <taxon>Oryza</taxon>
        <taxon>Oryza sativa</taxon>
    </lineage>
</organism>
<reference key="1">
    <citation type="journal article" date="2002" name="Nature">
        <title>The genome sequence and structure of rice chromosome 1.</title>
        <authorList>
            <person name="Sasaki T."/>
            <person name="Matsumoto T."/>
            <person name="Yamamoto K."/>
            <person name="Sakata K."/>
            <person name="Baba T."/>
            <person name="Katayose Y."/>
            <person name="Wu J."/>
            <person name="Niimura Y."/>
            <person name="Cheng Z."/>
            <person name="Nagamura Y."/>
            <person name="Antonio B.A."/>
            <person name="Kanamori H."/>
            <person name="Hosokawa S."/>
            <person name="Masukawa M."/>
            <person name="Arikawa K."/>
            <person name="Chiden Y."/>
            <person name="Hayashi M."/>
            <person name="Okamoto M."/>
            <person name="Ando T."/>
            <person name="Aoki H."/>
            <person name="Arita K."/>
            <person name="Hamada M."/>
            <person name="Harada C."/>
            <person name="Hijishita S."/>
            <person name="Honda M."/>
            <person name="Ichikawa Y."/>
            <person name="Idonuma A."/>
            <person name="Iijima M."/>
            <person name="Ikeda M."/>
            <person name="Ikeno M."/>
            <person name="Ito S."/>
            <person name="Ito T."/>
            <person name="Ito Y."/>
            <person name="Ito Y."/>
            <person name="Iwabuchi A."/>
            <person name="Kamiya K."/>
            <person name="Karasawa W."/>
            <person name="Katagiri S."/>
            <person name="Kikuta A."/>
            <person name="Kobayashi N."/>
            <person name="Kono I."/>
            <person name="Machita K."/>
            <person name="Maehara T."/>
            <person name="Mizuno H."/>
            <person name="Mizubayashi T."/>
            <person name="Mukai Y."/>
            <person name="Nagasaki H."/>
            <person name="Nakashima M."/>
            <person name="Nakama Y."/>
            <person name="Nakamichi Y."/>
            <person name="Nakamura M."/>
            <person name="Namiki N."/>
            <person name="Negishi M."/>
            <person name="Ohta I."/>
            <person name="Ono N."/>
            <person name="Saji S."/>
            <person name="Sakai K."/>
            <person name="Shibata M."/>
            <person name="Shimokawa T."/>
            <person name="Shomura A."/>
            <person name="Song J."/>
            <person name="Takazaki Y."/>
            <person name="Terasawa K."/>
            <person name="Tsuji K."/>
            <person name="Waki K."/>
            <person name="Yamagata H."/>
            <person name="Yamane H."/>
            <person name="Yoshiki S."/>
            <person name="Yoshihara R."/>
            <person name="Yukawa K."/>
            <person name="Zhong H."/>
            <person name="Iwama H."/>
            <person name="Endo T."/>
            <person name="Ito H."/>
            <person name="Hahn J.H."/>
            <person name="Kim H.-I."/>
            <person name="Eun M.-Y."/>
            <person name="Yano M."/>
            <person name="Jiang J."/>
            <person name="Gojobori T."/>
        </authorList>
    </citation>
    <scope>NUCLEOTIDE SEQUENCE [LARGE SCALE GENOMIC DNA]</scope>
    <source>
        <strain>cv. Nipponbare</strain>
    </source>
</reference>
<reference key="2">
    <citation type="journal article" date="2005" name="Nature">
        <title>The map-based sequence of the rice genome.</title>
        <authorList>
            <consortium name="International rice genome sequencing project (IRGSP)"/>
        </authorList>
    </citation>
    <scope>NUCLEOTIDE SEQUENCE [LARGE SCALE GENOMIC DNA]</scope>
    <source>
        <strain>cv. Nipponbare</strain>
    </source>
</reference>
<reference key="3">
    <citation type="journal article" date="2008" name="Nucleic Acids Res.">
        <title>The rice annotation project database (RAP-DB): 2008 update.</title>
        <authorList>
            <consortium name="The rice annotation project (RAP)"/>
        </authorList>
    </citation>
    <scope>GENOME REANNOTATION</scope>
    <source>
        <strain>cv. Nipponbare</strain>
    </source>
</reference>
<reference key="4">
    <citation type="journal article" date="2013" name="Rice">
        <title>Improvement of the Oryza sativa Nipponbare reference genome using next generation sequence and optical map data.</title>
        <authorList>
            <person name="Kawahara Y."/>
            <person name="de la Bastide M."/>
            <person name="Hamilton J.P."/>
            <person name="Kanamori H."/>
            <person name="McCombie W.R."/>
            <person name="Ouyang S."/>
            <person name="Schwartz D.C."/>
            <person name="Tanaka T."/>
            <person name="Wu J."/>
            <person name="Zhou S."/>
            <person name="Childs K.L."/>
            <person name="Davidson R.M."/>
            <person name="Lin H."/>
            <person name="Quesada-Ocampo L."/>
            <person name="Vaillancourt B."/>
            <person name="Sakai H."/>
            <person name="Lee S.S."/>
            <person name="Kim J."/>
            <person name="Numa H."/>
            <person name="Itoh T."/>
            <person name="Buell C.R."/>
            <person name="Matsumoto T."/>
        </authorList>
    </citation>
    <scope>GENOME REANNOTATION</scope>
    <source>
        <strain>cv. Nipponbare</strain>
    </source>
</reference>
<reference key="5">
    <citation type="journal article" date="2003" name="Science">
        <title>Collection, mapping, and annotation of over 28,000 cDNA clones from japonica rice.</title>
        <authorList>
            <consortium name="The rice full-length cDNA consortium"/>
        </authorList>
    </citation>
    <scope>NUCLEOTIDE SEQUENCE [LARGE SCALE MRNA] (ISOFORM 1)</scope>
    <source>
        <strain>cv. Nipponbare</strain>
    </source>
</reference>
<reference key="6">
    <citation type="journal article" date="1999" name="EMBO J.">
        <title>GIGANTEA: a circadian clock-controlled gene that regulates photoperiodic flowering in Arabidopsis and encodes a protein with several possible membrane-spanning domains.</title>
        <authorList>
            <person name="Fowler S."/>
            <person name="Lee K."/>
            <person name="Onouchi H."/>
            <person name="Samach A."/>
            <person name="Richardson K."/>
            <person name="Morris B."/>
            <person name="Coupland G."/>
            <person name="Putterill J."/>
        </authorList>
    </citation>
    <scope>NUCLEOTIDE SEQUENCE [MRNA] OF 185-1160 (ISOFORM 1)</scope>
</reference>
<reference key="7">
    <citation type="journal article" date="2002" name="Plant Cell Physiol.">
        <title>Isolation of rice genes possibly involved in the photoperiodic control of flowering by a fluorescent differential display method.</title>
        <authorList>
            <person name="Hayama R."/>
            <person name="Izawa T."/>
            <person name="Shimamoto K."/>
        </authorList>
    </citation>
    <scope>INDUCTION</scope>
</reference>
<reference key="8">
    <citation type="journal article" date="2003" name="Nature">
        <title>Adaptation of photoperiodic control pathways produces short-day flowering in rice.</title>
        <authorList>
            <person name="Hayama R."/>
            <person name="Yokoi S."/>
            <person name="Tamaki S."/>
            <person name="Yano M."/>
            <person name="Shimamoto K."/>
        </authorList>
    </citation>
    <scope>FUNCTION</scope>
</reference>
<proteinExistence type="evidence at transcript level"/>
<gene>
    <name type="primary">GI</name>
    <name type="ordered locus">Os01g0182600</name>
    <name type="ordered locus">LOC_Os01g08700</name>
    <name type="ORF">P0666G04.27-1</name>
    <name type="ORF">P0666G04.27-2</name>
</gene>
<accession>Q9AWL7</accession>
<accession>Q0JQ44</accession>
<accession>Q5VR72</accession>
<accession>Q5VR73</accession>
<accession>Q9SMB2</accession>
<dbReference type="EMBL" id="AP003047">
    <property type="protein sequence ID" value="BAD68052.1"/>
    <property type="molecule type" value="Genomic_DNA"/>
</dbReference>
<dbReference type="EMBL" id="AP003047">
    <property type="protein sequence ID" value="BAD68053.1"/>
    <property type="status" value="ALT_SEQ"/>
    <property type="molecule type" value="Genomic_DNA"/>
</dbReference>
<dbReference type="EMBL" id="AP008207">
    <property type="protein sequence ID" value="BAF04134.1"/>
    <property type="molecule type" value="Genomic_DNA"/>
</dbReference>
<dbReference type="EMBL" id="AP014957">
    <property type="protein sequence ID" value="BAS70743.1"/>
    <property type="molecule type" value="Genomic_DNA"/>
</dbReference>
<dbReference type="EMBL" id="AK067038">
    <property type="status" value="NOT_ANNOTATED_CDS"/>
    <property type="molecule type" value="mRNA"/>
</dbReference>
<dbReference type="EMBL" id="AJ133787">
    <property type="protein sequence ID" value="CAB56058.1"/>
    <property type="molecule type" value="mRNA"/>
</dbReference>
<dbReference type="RefSeq" id="XP_015649578.1">
    <property type="nucleotide sequence ID" value="XM_015794092.1"/>
</dbReference>
<dbReference type="RefSeq" id="XP_015649583.1">
    <molecule id="Q9AWL7-1"/>
    <property type="nucleotide sequence ID" value="XM_015794097.1"/>
</dbReference>
<dbReference type="RefSeq" id="XP_015649590.1">
    <molecule id="Q9AWL7-1"/>
    <property type="nucleotide sequence ID" value="XM_015794104.1"/>
</dbReference>
<dbReference type="RefSeq" id="XP_015649597.1">
    <property type="nucleotide sequence ID" value="XM_015794111.1"/>
</dbReference>
<dbReference type="RefSeq" id="XP_015649603.1">
    <molecule id="Q9AWL7-1"/>
    <property type="nucleotide sequence ID" value="XM_015794117.1"/>
</dbReference>
<dbReference type="RefSeq" id="XP_015649609.1">
    <property type="nucleotide sequence ID" value="XM_015794123.1"/>
</dbReference>
<dbReference type="SMR" id="Q9AWL7"/>
<dbReference type="FunCoup" id="Q9AWL7">
    <property type="interactions" value="767"/>
</dbReference>
<dbReference type="STRING" id="39947.Q9AWL7"/>
<dbReference type="PaxDb" id="39947-Q9AWL7"/>
<dbReference type="EnsemblPlants" id="Os01t0182600-01">
    <molecule id="Q9AWL7-1"/>
    <property type="protein sequence ID" value="Os01t0182600-01"/>
    <property type="gene ID" value="Os01g0182600"/>
</dbReference>
<dbReference type="EnsemblPlants" id="Os01t0182600-03">
    <molecule id="Q9AWL7-1"/>
    <property type="protein sequence ID" value="Os01t0182600-03"/>
    <property type="gene ID" value="Os01g0182600"/>
</dbReference>
<dbReference type="GeneID" id="4325329"/>
<dbReference type="Gramene" id="Os01t0182600-01">
    <molecule id="Q9AWL7-1"/>
    <property type="protein sequence ID" value="Os01t0182600-01"/>
    <property type="gene ID" value="Os01g0182600"/>
</dbReference>
<dbReference type="Gramene" id="Os01t0182600-03">
    <molecule id="Q9AWL7-1"/>
    <property type="protein sequence ID" value="Os01t0182600-03"/>
    <property type="gene ID" value="Os01g0182600"/>
</dbReference>
<dbReference type="KEGG" id="dosa:Os01g0182600"/>
<dbReference type="KEGG" id="osa:4325329"/>
<dbReference type="eggNOG" id="ENOG502QU75">
    <property type="taxonomic scope" value="Eukaryota"/>
</dbReference>
<dbReference type="HOGENOM" id="CLU_283623_0_0_1"/>
<dbReference type="InParanoid" id="Q9AWL7"/>
<dbReference type="OMA" id="QCKWDAE"/>
<dbReference type="OrthoDB" id="1893477at2759"/>
<dbReference type="PlantReactome" id="R-OSA-8933811">
    <property type="pathway name" value="Circadian rhythm"/>
</dbReference>
<dbReference type="PlantReactome" id="R-OSA-8934036">
    <property type="pathway name" value="Long day regulated expression of florigens"/>
</dbReference>
<dbReference type="Proteomes" id="UP000000763">
    <property type="component" value="Chromosome 1"/>
</dbReference>
<dbReference type="Proteomes" id="UP000059680">
    <property type="component" value="Chromosome 1"/>
</dbReference>
<dbReference type="GO" id="GO:0005634">
    <property type="term" value="C:nucleus"/>
    <property type="evidence" value="ECO:0000318"/>
    <property type="project" value="GO_Central"/>
</dbReference>
<dbReference type="GO" id="GO:0030154">
    <property type="term" value="P:cell differentiation"/>
    <property type="evidence" value="ECO:0007669"/>
    <property type="project" value="UniProtKB-KW"/>
</dbReference>
<dbReference type="GO" id="GO:0009908">
    <property type="term" value="P:flower development"/>
    <property type="evidence" value="ECO:0007669"/>
    <property type="project" value="UniProtKB-KW"/>
</dbReference>
<dbReference type="GO" id="GO:0042752">
    <property type="term" value="P:regulation of circadian rhythm"/>
    <property type="evidence" value="ECO:0000318"/>
    <property type="project" value="GO_Central"/>
</dbReference>
<dbReference type="GO" id="GO:0048586">
    <property type="term" value="P:regulation of long-day photoperiodism, flowering"/>
    <property type="evidence" value="ECO:0000318"/>
    <property type="project" value="GO_Central"/>
</dbReference>
<dbReference type="GO" id="GO:0006950">
    <property type="term" value="P:response to stress"/>
    <property type="evidence" value="ECO:0000318"/>
    <property type="project" value="GO_Central"/>
</dbReference>
<dbReference type="GO" id="GO:0048511">
    <property type="term" value="P:rhythmic process"/>
    <property type="evidence" value="ECO:0007669"/>
    <property type="project" value="UniProtKB-KW"/>
</dbReference>
<dbReference type="InterPro" id="IPR026211">
    <property type="entry name" value="GIGANTEA"/>
</dbReference>
<dbReference type="PANTHER" id="PTHR36319">
    <property type="entry name" value="PROTEIN GIGANTEA"/>
    <property type="match status" value="1"/>
</dbReference>
<dbReference type="PANTHER" id="PTHR36319:SF1">
    <property type="entry name" value="PROTEIN GIGANTEA"/>
    <property type="match status" value="1"/>
</dbReference>
<dbReference type="PRINTS" id="PR02081">
    <property type="entry name" value="GIGANTEA"/>
</dbReference>
<protein>
    <recommendedName>
        <fullName>Protein GIGANTEA</fullName>
    </recommendedName>
</protein>
<keyword id="KW-0025">Alternative splicing</keyword>
<keyword id="KW-0090">Biological rhythms</keyword>
<keyword id="KW-0217">Developmental protein</keyword>
<keyword id="KW-0221">Differentiation</keyword>
<keyword id="KW-0287">Flowering</keyword>
<keyword id="KW-0539">Nucleus</keyword>
<keyword id="KW-1185">Reference proteome</keyword>
<sequence>MSASNEKWIDGLQFSSLFWPPPQDSQQKQAQILAYVEYFGQFTADSEQFPEDIAQLIQSCYPSKEKRLVDEVLATFVLHHPEHGHAVVHPILSRIIDGTLSYDRNGFPFMSFISLFSHTSEKEYSEQWALACGEILRVLTHYNRPIFKVDHQHSEAECSSTSDQASSCESMEKRANGSPRNEPDRKPLRPLSPWITDILLAAPLGIRSDYFRWCGGVMGKYAAGGELKPPTTAYSRGSGKHPQLMPSTPRWAVANGAGVILSVCDEEVARYETANLTAAAVPALLLPPPTTPLDEHLVAGLPPLEPYARLFHRYYAIATPSATQRLLFGLLEAPPSWAPDALDAAVQLVELLRAAEDYDSGMRLPKNWMHLHFLRAIGTAMSMRAGIAADTSAALLFRILSQPTLLFPPLRHAEGVELHHEPLGGYVSSYKRQLEVPASEATIDATAQGIASMLCAHGPDVEWRICTIWEAAYGLLPLSSSAVDLPEIVVAAPLQPPTLSWSLYLPLLKVFEYLPRGSPSEACLMRIFVATVEAILRRTFPSETSEQSRKPRSQSKNLAVAELRTMIHSLFVESCASMDLASRLLFVVLTVCVSHQALPGGSKRPTGSDNHSSEEVTNDSRLTNGRNRCKKRQGPVATFDSYVLAAVCALSCELQLFPFISKNGNHSNLKDSIKIVIPGKTTGISNELHNSISSAILHTRRILGILEALFSLKPSSVGTSWSYSSNEIVAAAMVAAHVSELFRRSRPCLNALSALKQCKWDAEISTRASSLYHLIDLHGKTVTSIVNKAEPLEAHLTLTPVKKDEPPIEEKNINSSDGGALEKKDASRSHRKNGFARPLLKCAEDVILNGDVASTSGKAIASLQVEASDLANFLTMDRNGGYRGSQTLLRSVLSEKQELCFSVVSLLWQKLIASPEMQMSAESTSAHQGWRKVVDALCDIVSASPTKASAAIVLQAEKDLQPWIARDDEQGQKMWRVNQRIVKLIAELMRNHDSPEALVILASASDLLLRATDGMLVDGEACTLPQLELLEVTARAVHLIVEWGDSGVSVADGLSNLLKCRLSTTIRCLSHPSAHVRALSMSVLRDILNSGQINSSKLIQGEHRNGIQSPTYQCLAASIINWQADVERCIEWEAHSRRATGLTLAFLTAAAKELGCPLTC</sequence>
<feature type="chain" id="PRO_0000087490" description="Protein GIGANTEA">
    <location>
        <begin position="1"/>
        <end position="1160"/>
    </location>
</feature>
<feature type="region of interest" description="Disordered" evidence="2">
    <location>
        <begin position="158"/>
        <end position="188"/>
    </location>
</feature>
<feature type="region of interest" description="Disordered" evidence="2">
    <location>
        <begin position="600"/>
        <end position="629"/>
    </location>
</feature>
<feature type="region of interest" description="Disordered" evidence="2">
    <location>
        <begin position="800"/>
        <end position="830"/>
    </location>
</feature>
<feature type="compositionally biased region" description="Polar residues" evidence="2">
    <location>
        <begin position="158"/>
        <end position="169"/>
    </location>
</feature>
<feature type="compositionally biased region" description="Basic and acidic residues" evidence="2">
    <location>
        <begin position="170"/>
        <end position="187"/>
    </location>
</feature>
<feature type="compositionally biased region" description="Basic and acidic residues" evidence="2">
    <location>
        <begin position="801"/>
        <end position="812"/>
    </location>
</feature>
<feature type="splice variant" id="VSP_013910" description="In isoform 2." evidence="5">
    <location>
        <begin position="278"/>
        <end position="959"/>
    </location>
</feature>
<feature type="sequence conflict" description="In Ref. 5; AK067038." evidence="5" ref="5">
    <location>
        <position position="701"/>
    </location>
</feature>
<feature type="sequence conflict" description="In Ref. 6; CAB56058." evidence="5" ref="6">
    <location>
        <position position="1149"/>
    </location>
</feature>